<comment type="function">
    <text evidence="2 3 4 5">S-adenosyl-L-methionine-dependent methyltransferase that mediates N(3)-methylcytidine modification of residue 32 of the tRNA anticodon loop of tRNA(Ser), including tRNA(Ser)(UGA) and tRNA(Ser)(GCU) (PubMed:32923617, PubMed:34268557, PubMed:34862464, PubMed:34922197). Interaction with SARS1/SerRS is required for N(3)-methylcytidine methylation (PubMed:34268557).</text>
</comment>
<comment type="catalytic activity">
    <reaction evidence="2 3 4 5">
        <text>cytidine(32) in tRNA(Ser) + S-adenosyl-L-methionine = N(3)-methylcytidine(32) in tRNA(Ser) + S-adenosyl-L-homocysteine + H(+)</text>
        <dbReference type="Rhea" id="RHEA:50956"/>
        <dbReference type="Rhea" id="RHEA-COMP:12849"/>
        <dbReference type="Rhea" id="RHEA-COMP:12851"/>
        <dbReference type="ChEBI" id="CHEBI:15378"/>
        <dbReference type="ChEBI" id="CHEBI:57856"/>
        <dbReference type="ChEBI" id="CHEBI:59789"/>
        <dbReference type="ChEBI" id="CHEBI:74894"/>
        <dbReference type="ChEBI" id="CHEBI:82748"/>
    </reaction>
    <physiologicalReaction direction="left-to-right" evidence="2 3 4 5">
        <dbReference type="Rhea" id="RHEA:50957"/>
    </physiologicalReaction>
</comment>
<comment type="biophysicochemical properties">
    <kinetics>
        <KM evidence="5">0.24 uM for tRNA(Ser)</KM>
        <KM evidence="5">0.68 uM for S-adenosyl-L-methionine</KM>
        <text evidence="5">kcat is 7200 min(-1) for tRNA(Ser) (PubMed:34922197). kcat is 7100 min(-1) for S-adenosyl-L-methionine (PubMed:34922197).</text>
    </kinetics>
</comment>
<comment type="subunit">
    <text evidence="1 3 4">Monomer (PubMed:34862464). Interacts with SARS1/SerRS; interaction is mediated via tRNA(Ser) and is required for N(3)-methylcytidine methylation (PubMed:28655767, PubMed:34268557).</text>
</comment>
<comment type="interaction">
    <interactant intactId="EBI-17861723">
        <id>Q8TCB7</id>
    </interactant>
    <interactant intactId="EBI-751540">
        <id>O95872</id>
        <label>GPANK1</label>
    </interactant>
    <organismsDiffer>false</organismsDiffer>
    <experiments>3</experiments>
</comment>
<comment type="subcellular location">
    <subcellularLocation>
        <location evidence="3">Cytoplasm</location>
    </subcellularLocation>
    <subcellularLocation>
        <location evidence="3">Nucleus</location>
    </subcellularLocation>
</comment>
<comment type="alternative products">
    <event type="alternative splicing"/>
    <isoform>
        <id>Q8TCB7-1</id>
        <name>1</name>
        <sequence type="displayed"/>
    </isoform>
    <isoform>
        <id>Q8TCB7-2</id>
        <name>2</name>
        <sequence type="described" ref="VSP_008480"/>
    </isoform>
</comment>
<comment type="similarity">
    <text evidence="9">Belongs to the methyltransferase superfamily. METL family.</text>
</comment>
<comment type="sequence caution" evidence="9">
    <conflict type="miscellaneous discrepancy">
        <sequence resource="EMBL-CDS" id="AAH22400"/>
    </conflict>
    <text>Contaminating sequence. Potential poly-A sequence.</text>
</comment>
<dbReference type="EC" id="2.1.1.-" evidence="2 3 4 5"/>
<dbReference type="EMBL" id="AK057791">
    <property type="protein sequence ID" value="BAB71574.1"/>
    <property type="molecule type" value="mRNA"/>
</dbReference>
<dbReference type="EMBL" id="AC027125">
    <property type="status" value="NOT_ANNOTATED_CDS"/>
    <property type="molecule type" value="Genomic_DNA"/>
</dbReference>
<dbReference type="EMBL" id="BC022400">
    <property type="protein sequence ID" value="AAH22400.1"/>
    <property type="status" value="ALT_SEQ"/>
    <property type="molecule type" value="mRNA"/>
</dbReference>
<dbReference type="CCDS" id="CCDS43056.1">
    <molecule id="Q8TCB7-1"/>
</dbReference>
<dbReference type="CCDS" id="CCDS87051.1">
    <molecule id="Q8TCB7-2"/>
</dbReference>
<dbReference type="RefSeq" id="NP_001288721.1">
    <property type="nucleotide sequence ID" value="NM_001301792.1"/>
</dbReference>
<dbReference type="RefSeq" id="NP_001317591.1">
    <molecule id="Q8TCB7-2"/>
    <property type="nucleotide sequence ID" value="NM_001330662.2"/>
</dbReference>
<dbReference type="RefSeq" id="NP_689609.2">
    <molecule id="Q8TCB7-1"/>
    <property type="nucleotide sequence ID" value="NM_152396.4"/>
</dbReference>
<dbReference type="RefSeq" id="XP_005264924.1">
    <molecule id="Q8TCB7-1"/>
    <property type="nucleotide sequence ID" value="XM_005264867.5"/>
</dbReference>
<dbReference type="RefSeq" id="XP_005264927.1">
    <property type="nucleotide sequence ID" value="XM_005264870.4"/>
</dbReference>
<dbReference type="RefSeq" id="XP_006713033.1">
    <molecule id="Q8TCB7-1"/>
    <property type="nucleotide sequence ID" value="XM_006712970.5"/>
</dbReference>
<dbReference type="RefSeq" id="XP_016861207.1">
    <molecule id="Q8TCB7-1"/>
    <property type="nucleotide sequence ID" value="XM_017005718.3"/>
</dbReference>
<dbReference type="RefSeq" id="XP_047303406.1">
    <molecule id="Q8TCB7-1"/>
    <property type="nucleotide sequence ID" value="XM_047447450.1"/>
</dbReference>
<dbReference type="RefSeq" id="XP_047303407.1">
    <molecule id="Q8TCB7-2"/>
    <property type="nucleotide sequence ID" value="XM_047447451.1"/>
</dbReference>
<dbReference type="RefSeq" id="XP_054201222.1">
    <molecule id="Q8TCB7-1"/>
    <property type="nucleotide sequence ID" value="XM_054345247.1"/>
</dbReference>
<dbReference type="RefSeq" id="XP_054201223.1">
    <molecule id="Q8TCB7-1"/>
    <property type="nucleotide sequence ID" value="XM_054345248.1"/>
</dbReference>
<dbReference type="RefSeq" id="XP_054201224.1">
    <molecule id="Q8TCB7-1"/>
    <property type="nucleotide sequence ID" value="XM_054345249.1"/>
</dbReference>
<dbReference type="RefSeq" id="XP_054201225.1">
    <molecule id="Q8TCB7-1"/>
    <property type="nucleotide sequence ID" value="XM_054345250.1"/>
</dbReference>
<dbReference type="RefSeq" id="XP_054201226.1">
    <molecule id="Q8TCB7-2"/>
    <property type="nucleotide sequence ID" value="XM_054345251.1"/>
</dbReference>
<dbReference type="PDB" id="7EZG">
    <property type="method" value="X-ray"/>
    <property type="resolution" value="1.90 A"/>
    <property type="chains" value="A=1-284"/>
</dbReference>
<dbReference type="PDB" id="7F1E">
    <property type="method" value="X-ray"/>
    <property type="resolution" value="2.59 A"/>
    <property type="chains" value="A/B=1-284"/>
</dbReference>
<dbReference type="PDB" id="8OWX">
    <property type="method" value="X-ray"/>
    <property type="resolution" value="2.60 A"/>
    <property type="chains" value="A/B=1-271"/>
</dbReference>
<dbReference type="PDB" id="8OWY">
    <property type="method" value="X-ray"/>
    <property type="resolution" value="3.20 A"/>
    <property type="chains" value="A/B=40-269"/>
</dbReference>
<dbReference type="PDB" id="8P7B">
    <property type="method" value="EM"/>
    <property type="resolution" value="2.42 A"/>
    <property type="chains" value="A=1-284"/>
</dbReference>
<dbReference type="PDB" id="8P7C">
    <property type="method" value="EM"/>
    <property type="resolution" value="3.70 A"/>
    <property type="chains" value="A/C=1-284"/>
</dbReference>
<dbReference type="PDB" id="8P7D">
    <property type="method" value="EM"/>
    <property type="resolution" value="4.20 A"/>
    <property type="chains" value="A=1-284"/>
</dbReference>
<dbReference type="PDBsum" id="7EZG"/>
<dbReference type="PDBsum" id="7F1E"/>
<dbReference type="PDBsum" id="8OWX"/>
<dbReference type="PDBsum" id="8OWY"/>
<dbReference type="PDBsum" id="8P7B"/>
<dbReference type="PDBsum" id="8P7C"/>
<dbReference type="PDBsum" id="8P7D"/>
<dbReference type="EMDB" id="EMD-17528"/>
<dbReference type="EMDB" id="EMD-17529"/>
<dbReference type="EMDB" id="EMD-17530"/>
<dbReference type="SMR" id="Q8TCB7"/>
<dbReference type="BioGRID" id="126301">
    <property type="interactions" value="18"/>
</dbReference>
<dbReference type="FunCoup" id="Q8TCB7">
    <property type="interactions" value="3347"/>
</dbReference>
<dbReference type="IntAct" id="Q8TCB7">
    <property type="interactions" value="12"/>
</dbReference>
<dbReference type="STRING" id="9606.ENSP00000407613"/>
<dbReference type="iPTMnet" id="Q8TCB7"/>
<dbReference type="PhosphoSitePlus" id="Q8TCB7"/>
<dbReference type="BioMuta" id="METTL6"/>
<dbReference type="DMDM" id="269849620"/>
<dbReference type="jPOST" id="Q8TCB7"/>
<dbReference type="MassIVE" id="Q8TCB7"/>
<dbReference type="PaxDb" id="9606-ENSP00000407613"/>
<dbReference type="PeptideAtlas" id="Q8TCB7"/>
<dbReference type="ProteomicsDB" id="74111">
    <molecule id="Q8TCB7-1"/>
</dbReference>
<dbReference type="ProteomicsDB" id="74112">
    <molecule id="Q8TCB7-2"/>
</dbReference>
<dbReference type="Pumba" id="Q8TCB7"/>
<dbReference type="Antibodypedia" id="26744">
    <property type="antibodies" value="126 antibodies from 21 providers"/>
</dbReference>
<dbReference type="DNASU" id="131965"/>
<dbReference type="Ensembl" id="ENST00000383789.9">
    <molecule id="Q8TCB7-2"/>
    <property type="protein sequence ID" value="ENSP00000373299.5"/>
    <property type="gene ID" value="ENSG00000206562.12"/>
</dbReference>
<dbReference type="Ensembl" id="ENST00000383790.8">
    <molecule id="Q8TCB7-1"/>
    <property type="protein sequence ID" value="ENSP00000373300.3"/>
    <property type="gene ID" value="ENSG00000206562.12"/>
</dbReference>
<dbReference type="Ensembl" id="ENST00000443029.5">
    <molecule id="Q8TCB7-1"/>
    <property type="protein sequence ID" value="ENSP00000407613.1"/>
    <property type="gene ID" value="ENSG00000206562.12"/>
</dbReference>
<dbReference type="GeneID" id="131965"/>
<dbReference type="KEGG" id="hsa:131965"/>
<dbReference type="MANE-Select" id="ENST00000383790.8">
    <property type="protein sequence ID" value="ENSP00000373300.3"/>
    <property type="RefSeq nucleotide sequence ID" value="NM_152396.4"/>
    <property type="RefSeq protein sequence ID" value="NP_689609.2"/>
</dbReference>
<dbReference type="UCSC" id="uc003bzs.2">
    <molecule id="Q8TCB7-1"/>
    <property type="organism name" value="human"/>
</dbReference>
<dbReference type="AGR" id="HGNC:28343"/>
<dbReference type="CTD" id="131965"/>
<dbReference type="DisGeNET" id="131965"/>
<dbReference type="GeneCards" id="METTL6"/>
<dbReference type="HGNC" id="HGNC:28343">
    <property type="gene designation" value="METTL6"/>
</dbReference>
<dbReference type="HPA" id="ENSG00000206562">
    <property type="expression patterns" value="Low tissue specificity"/>
</dbReference>
<dbReference type="MIM" id="618903">
    <property type="type" value="gene"/>
</dbReference>
<dbReference type="neXtProt" id="NX_Q8TCB7"/>
<dbReference type="OpenTargets" id="ENSG00000206562"/>
<dbReference type="PharmGKB" id="PA142671462"/>
<dbReference type="VEuPathDB" id="HostDB:ENSG00000206562"/>
<dbReference type="eggNOG" id="KOG2361">
    <property type="taxonomic scope" value="Eukaryota"/>
</dbReference>
<dbReference type="GeneTree" id="ENSGT00940000156679"/>
<dbReference type="HOGENOM" id="CLU_029724_2_2_1"/>
<dbReference type="InParanoid" id="Q8TCB7"/>
<dbReference type="OMA" id="DAQRNWD"/>
<dbReference type="OrthoDB" id="417697at2759"/>
<dbReference type="PAN-GO" id="Q8TCB7">
    <property type="GO annotations" value="0 GO annotations based on evolutionary models"/>
</dbReference>
<dbReference type="PhylomeDB" id="Q8TCB7"/>
<dbReference type="TreeFam" id="TF321001"/>
<dbReference type="PathwayCommons" id="Q8TCB7"/>
<dbReference type="SignaLink" id="Q8TCB7"/>
<dbReference type="BioGRID-ORCS" id="131965">
    <property type="hits" value="7 hits in 1155 CRISPR screens"/>
</dbReference>
<dbReference type="GenomeRNAi" id="131965"/>
<dbReference type="Pharos" id="Q8TCB7">
    <property type="development level" value="Tbio"/>
</dbReference>
<dbReference type="PRO" id="PR:Q8TCB7"/>
<dbReference type="Proteomes" id="UP000005640">
    <property type="component" value="Chromosome 3"/>
</dbReference>
<dbReference type="RNAct" id="Q8TCB7">
    <property type="molecule type" value="protein"/>
</dbReference>
<dbReference type="Bgee" id="ENSG00000206562">
    <property type="expression patterns" value="Expressed in body of pancreas and 154 other cell types or tissues"/>
</dbReference>
<dbReference type="ExpressionAtlas" id="Q8TCB7">
    <property type="expression patterns" value="baseline and differential"/>
</dbReference>
<dbReference type="GO" id="GO:0005737">
    <property type="term" value="C:cytoplasm"/>
    <property type="evidence" value="ECO:0000314"/>
    <property type="project" value="UniProtKB"/>
</dbReference>
<dbReference type="GO" id="GO:0005634">
    <property type="term" value="C:nucleus"/>
    <property type="evidence" value="ECO:0000314"/>
    <property type="project" value="UniProtKB"/>
</dbReference>
<dbReference type="GO" id="GO:0019899">
    <property type="term" value="F:enzyme binding"/>
    <property type="evidence" value="ECO:0000353"/>
    <property type="project" value="UniProtKB"/>
</dbReference>
<dbReference type="GO" id="GO:0052735">
    <property type="term" value="F:tRNA (cytidine-3-)-methyltransferase activity"/>
    <property type="evidence" value="ECO:0000314"/>
    <property type="project" value="UniProtKB"/>
</dbReference>
<dbReference type="GO" id="GO:0030488">
    <property type="term" value="P:tRNA methylation"/>
    <property type="evidence" value="ECO:0000314"/>
    <property type="project" value="UniProtKB"/>
</dbReference>
<dbReference type="GO" id="GO:0006400">
    <property type="term" value="P:tRNA modification"/>
    <property type="evidence" value="ECO:0000314"/>
    <property type="project" value="UniProt"/>
</dbReference>
<dbReference type="CDD" id="cd02440">
    <property type="entry name" value="AdoMet_MTases"/>
    <property type="match status" value="1"/>
</dbReference>
<dbReference type="FunFam" id="3.40.50.150:FF:000279">
    <property type="entry name" value="Methyltransferase-like protein"/>
    <property type="match status" value="1"/>
</dbReference>
<dbReference type="Gene3D" id="3.40.50.150">
    <property type="entry name" value="Vaccinia Virus protein VP39"/>
    <property type="match status" value="1"/>
</dbReference>
<dbReference type="InterPro" id="IPR013217">
    <property type="entry name" value="Methyltransf_12"/>
</dbReference>
<dbReference type="InterPro" id="IPR026113">
    <property type="entry name" value="METTL2/6/8-like"/>
</dbReference>
<dbReference type="InterPro" id="IPR029063">
    <property type="entry name" value="SAM-dependent_MTases_sf"/>
</dbReference>
<dbReference type="PANTHER" id="PTHR22809">
    <property type="entry name" value="METHYLTRANSFERASE-RELATED"/>
    <property type="match status" value="1"/>
</dbReference>
<dbReference type="PANTHER" id="PTHR22809:SF5">
    <property type="entry name" value="TRNA N(3)-METHYLCYTIDINE METHYLTRANSFERASE METTL6"/>
    <property type="match status" value="1"/>
</dbReference>
<dbReference type="Pfam" id="PF08242">
    <property type="entry name" value="Methyltransf_12"/>
    <property type="match status" value="1"/>
</dbReference>
<dbReference type="PIRSF" id="PIRSF037755">
    <property type="entry name" value="Mettl2_prd"/>
    <property type="match status" value="1"/>
</dbReference>
<dbReference type="SUPFAM" id="SSF53335">
    <property type="entry name" value="S-adenosyl-L-methionine-dependent methyltransferases"/>
    <property type="match status" value="1"/>
</dbReference>
<keyword id="KW-0002">3D-structure</keyword>
<keyword id="KW-0025">Alternative splicing</keyword>
<keyword id="KW-0963">Cytoplasm</keyword>
<keyword id="KW-0489">Methyltransferase</keyword>
<keyword id="KW-0539">Nucleus</keyword>
<keyword id="KW-1267">Proteomics identification</keyword>
<keyword id="KW-1185">Reference proteome</keyword>
<keyword id="KW-0949">S-adenosyl-L-methionine</keyword>
<keyword id="KW-0808">Transferase</keyword>
<keyword id="KW-0819">tRNA processing</keyword>
<accession>Q8TCB7</accession>
<accession>Q96LU4</accession>
<organism>
    <name type="scientific">Homo sapiens</name>
    <name type="common">Human</name>
    <dbReference type="NCBI Taxonomy" id="9606"/>
    <lineage>
        <taxon>Eukaryota</taxon>
        <taxon>Metazoa</taxon>
        <taxon>Chordata</taxon>
        <taxon>Craniata</taxon>
        <taxon>Vertebrata</taxon>
        <taxon>Euteleostomi</taxon>
        <taxon>Mammalia</taxon>
        <taxon>Eutheria</taxon>
        <taxon>Euarchontoglires</taxon>
        <taxon>Primates</taxon>
        <taxon>Haplorrhini</taxon>
        <taxon>Catarrhini</taxon>
        <taxon>Hominidae</taxon>
        <taxon>Homo</taxon>
    </lineage>
</organism>
<gene>
    <name evidence="7 10" type="primary">METTL6</name>
</gene>
<proteinExistence type="evidence at protein level"/>
<reference key="1">
    <citation type="journal article" date="2004" name="Nat. Genet.">
        <title>Complete sequencing and characterization of 21,243 full-length human cDNAs.</title>
        <authorList>
            <person name="Ota T."/>
            <person name="Suzuki Y."/>
            <person name="Nishikawa T."/>
            <person name="Otsuki T."/>
            <person name="Sugiyama T."/>
            <person name="Irie R."/>
            <person name="Wakamatsu A."/>
            <person name="Hayashi K."/>
            <person name="Sato H."/>
            <person name="Nagai K."/>
            <person name="Kimura K."/>
            <person name="Makita H."/>
            <person name="Sekine M."/>
            <person name="Obayashi M."/>
            <person name="Nishi T."/>
            <person name="Shibahara T."/>
            <person name="Tanaka T."/>
            <person name="Ishii S."/>
            <person name="Yamamoto J."/>
            <person name="Saito K."/>
            <person name="Kawai Y."/>
            <person name="Isono Y."/>
            <person name="Nakamura Y."/>
            <person name="Nagahari K."/>
            <person name="Murakami K."/>
            <person name="Yasuda T."/>
            <person name="Iwayanagi T."/>
            <person name="Wagatsuma M."/>
            <person name="Shiratori A."/>
            <person name="Sudo H."/>
            <person name="Hosoiri T."/>
            <person name="Kaku Y."/>
            <person name="Kodaira H."/>
            <person name="Kondo H."/>
            <person name="Sugawara M."/>
            <person name="Takahashi M."/>
            <person name="Kanda K."/>
            <person name="Yokoi T."/>
            <person name="Furuya T."/>
            <person name="Kikkawa E."/>
            <person name="Omura Y."/>
            <person name="Abe K."/>
            <person name="Kamihara K."/>
            <person name="Katsuta N."/>
            <person name="Sato K."/>
            <person name="Tanikawa M."/>
            <person name="Yamazaki M."/>
            <person name="Ninomiya K."/>
            <person name="Ishibashi T."/>
            <person name="Yamashita H."/>
            <person name="Murakawa K."/>
            <person name="Fujimori K."/>
            <person name="Tanai H."/>
            <person name="Kimata M."/>
            <person name="Watanabe M."/>
            <person name="Hiraoka S."/>
            <person name="Chiba Y."/>
            <person name="Ishida S."/>
            <person name="Ono Y."/>
            <person name="Takiguchi S."/>
            <person name="Watanabe S."/>
            <person name="Yosida M."/>
            <person name="Hotuta T."/>
            <person name="Kusano J."/>
            <person name="Kanehori K."/>
            <person name="Takahashi-Fujii A."/>
            <person name="Hara H."/>
            <person name="Tanase T.-O."/>
            <person name="Nomura Y."/>
            <person name="Togiya S."/>
            <person name="Komai F."/>
            <person name="Hara R."/>
            <person name="Takeuchi K."/>
            <person name="Arita M."/>
            <person name="Imose N."/>
            <person name="Musashino K."/>
            <person name="Yuuki H."/>
            <person name="Oshima A."/>
            <person name="Sasaki N."/>
            <person name="Aotsuka S."/>
            <person name="Yoshikawa Y."/>
            <person name="Matsunawa H."/>
            <person name="Ichihara T."/>
            <person name="Shiohata N."/>
            <person name="Sano S."/>
            <person name="Moriya S."/>
            <person name="Momiyama H."/>
            <person name="Satoh N."/>
            <person name="Takami S."/>
            <person name="Terashima Y."/>
            <person name="Suzuki O."/>
            <person name="Nakagawa S."/>
            <person name="Senoh A."/>
            <person name="Mizoguchi H."/>
            <person name="Goto Y."/>
            <person name="Shimizu F."/>
            <person name="Wakebe H."/>
            <person name="Hishigaki H."/>
            <person name="Watanabe T."/>
            <person name="Sugiyama A."/>
            <person name="Takemoto M."/>
            <person name="Kawakami B."/>
            <person name="Yamazaki M."/>
            <person name="Watanabe K."/>
            <person name="Kumagai A."/>
            <person name="Itakura S."/>
            <person name="Fukuzumi Y."/>
            <person name="Fujimori Y."/>
            <person name="Komiyama M."/>
            <person name="Tashiro H."/>
            <person name="Tanigami A."/>
            <person name="Fujiwara T."/>
            <person name="Ono T."/>
            <person name="Yamada K."/>
            <person name="Fujii Y."/>
            <person name="Ozaki K."/>
            <person name="Hirao M."/>
            <person name="Ohmori Y."/>
            <person name="Kawabata A."/>
            <person name="Hikiji T."/>
            <person name="Kobatake N."/>
            <person name="Inagaki H."/>
            <person name="Ikema Y."/>
            <person name="Okamoto S."/>
            <person name="Okitani R."/>
            <person name="Kawakami T."/>
            <person name="Noguchi S."/>
            <person name="Itoh T."/>
            <person name="Shigeta K."/>
            <person name="Senba T."/>
            <person name="Matsumura K."/>
            <person name="Nakajima Y."/>
            <person name="Mizuno T."/>
            <person name="Morinaga M."/>
            <person name="Sasaki M."/>
            <person name="Togashi T."/>
            <person name="Oyama M."/>
            <person name="Hata H."/>
            <person name="Watanabe M."/>
            <person name="Komatsu T."/>
            <person name="Mizushima-Sugano J."/>
            <person name="Satoh T."/>
            <person name="Shirai Y."/>
            <person name="Takahashi Y."/>
            <person name="Nakagawa K."/>
            <person name="Okumura K."/>
            <person name="Nagase T."/>
            <person name="Nomura N."/>
            <person name="Kikuchi H."/>
            <person name="Masuho Y."/>
            <person name="Yamashita R."/>
            <person name="Nakai K."/>
            <person name="Yada T."/>
            <person name="Nakamura Y."/>
            <person name="Ohara O."/>
            <person name="Isogai T."/>
            <person name="Sugano S."/>
        </authorList>
    </citation>
    <scope>NUCLEOTIDE SEQUENCE [LARGE SCALE MRNA] (ISOFORM 2)</scope>
    <source>
        <tissue>Cerebellum</tissue>
    </source>
</reference>
<reference key="2">
    <citation type="journal article" date="2006" name="Nature">
        <title>The DNA sequence, annotation and analysis of human chromosome 3.</title>
        <authorList>
            <person name="Muzny D.M."/>
            <person name="Scherer S.E."/>
            <person name="Kaul R."/>
            <person name="Wang J."/>
            <person name="Yu J."/>
            <person name="Sudbrak R."/>
            <person name="Buhay C.J."/>
            <person name="Chen R."/>
            <person name="Cree A."/>
            <person name="Ding Y."/>
            <person name="Dugan-Rocha S."/>
            <person name="Gill R."/>
            <person name="Gunaratne P."/>
            <person name="Harris R.A."/>
            <person name="Hawes A.C."/>
            <person name="Hernandez J."/>
            <person name="Hodgson A.V."/>
            <person name="Hume J."/>
            <person name="Jackson A."/>
            <person name="Khan Z.M."/>
            <person name="Kovar-Smith C."/>
            <person name="Lewis L.R."/>
            <person name="Lozado R.J."/>
            <person name="Metzker M.L."/>
            <person name="Milosavljevic A."/>
            <person name="Miner G.R."/>
            <person name="Morgan M.B."/>
            <person name="Nazareth L.V."/>
            <person name="Scott G."/>
            <person name="Sodergren E."/>
            <person name="Song X.-Z."/>
            <person name="Steffen D."/>
            <person name="Wei S."/>
            <person name="Wheeler D.A."/>
            <person name="Wright M.W."/>
            <person name="Worley K.C."/>
            <person name="Yuan Y."/>
            <person name="Zhang Z."/>
            <person name="Adams C.Q."/>
            <person name="Ansari-Lari M.A."/>
            <person name="Ayele M."/>
            <person name="Brown M.J."/>
            <person name="Chen G."/>
            <person name="Chen Z."/>
            <person name="Clendenning J."/>
            <person name="Clerc-Blankenburg K.P."/>
            <person name="Chen R."/>
            <person name="Chen Z."/>
            <person name="Davis C."/>
            <person name="Delgado O."/>
            <person name="Dinh H.H."/>
            <person name="Dong W."/>
            <person name="Draper H."/>
            <person name="Ernst S."/>
            <person name="Fu G."/>
            <person name="Gonzalez-Garay M.L."/>
            <person name="Garcia D.K."/>
            <person name="Gillett W."/>
            <person name="Gu J."/>
            <person name="Hao B."/>
            <person name="Haugen E."/>
            <person name="Havlak P."/>
            <person name="He X."/>
            <person name="Hennig S."/>
            <person name="Hu S."/>
            <person name="Huang W."/>
            <person name="Jackson L.R."/>
            <person name="Jacob L.S."/>
            <person name="Kelly S.H."/>
            <person name="Kube M."/>
            <person name="Levy R."/>
            <person name="Li Z."/>
            <person name="Liu B."/>
            <person name="Liu J."/>
            <person name="Liu W."/>
            <person name="Lu J."/>
            <person name="Maheshwari M."/>
            <person name="Nguyen B.-V."/>
            <person name="Okwuonu G.O."/>
            <person name="Palmeiri A."/>
            <person name="Pasternak S."/>
            <person name="Perez L.M."/>
            <person name="Phelps K.A."/>
            <person name="Plopper F.J."/>
            <person name="Qiang B."/>
            <person name="Raymond C."/>
            <person name="Rodriguez R."/>
            <person name="Saenphimmachak C."/>
            <person name="Santibanez J."/>
            <person name="Shen H."/>
            <person name="Shen Y."/>
            <person name="Subramanian S."/>
            <person name="Tabor P.E."/>
            <person name="Verduzco D."/>
            <person name="Waldron L."/>
            <person name="Wang J."/>
            <person name="Wang J."/>
            <person name="Wang Q."/>
            <person name="Williams G.A."/>
            <person name="Wong G.K.-S."/>
            <person name="Yao Z."/>
            <person name="Zhang J."/>
            <person name="Zhang X."/>
            <person name="Zhao G."/>
            <person name="Zhou J."/>
            <person name="Zhou Y."/>
            <person name="Nelson D."/>
            <person name="Lehrach H."/>
            <person name="Reinhardt R."/>
            <person name="Naylor S.L."/>
            <person name="Yang H."/>
            <person name="Olson M."/>
            <person name="Weinstock G."/>
            <person name="Gibbs R.A."/>
        </authorList>
    </citation>
    <scope>NUCLEOTIDE SEQUENCE [LARGE SCALE GENOMIC DNA]</scope>
</reference>
<reference key="3">
    <citation type="journal article" date="2004" name="Genome Res.">
        <title>The status, quality, and expansion of the NIH full-length cDNA project: the Mammalian Gene Collection (MGC).</title>
        <authorList>
            <consortium name="The MGC Project Team"/>
        </authorList>
    </citation>
    <scope>NUCLEOTIDE SEQUENCE [LARGE SCALE MRNA] (ISOFORM 1)</scope>
    <source>
        <tissue>Lung</tissue>
    </source>
</reference>
<reference key="4">
    <citation type="journal article" date="2017" name="J. Biol. Chem.">
        <title>Three distinct 3-methylcytidine (m3C) methyltransferases modify tRNA and mRNA in mice and humans.</title>
        <authorList>
            <person name="Xu L."/>
            <person name="Liu X."/>
            <person name="Sheng N."/>
            <person name="Oo K.S."/>
            <person name="Liang J."/>
            <person name="Chionh Y.H."/>
            <person name="Xu J."/>
            <person name="Ye F."/>
            <person name="Gao Y.G."/>
            <person name="Dedon P.C."/>
            <person name="Fu X.Y."/>
        </authorList>
    </citation>
    <scope>INTERACTION WITH SARS1</scope>
</reference>
<reference key="5">
    <citation type="journal article" date="2020" name="Sci. Adv.">
        <title>METTL6 is a tRNA m3C methyltransferase that regulates pluripotency and tumor cell growth.</title>
        <authorList>
            <person name="Ignatova V.V."/>
            <person name="Kaiser S."/>
            <person name="Ho J.S.Y."/>
            <person name="Bing X."/>
            <person name="Stolz P."/>
            <person name="Tan Y.X."/>
            <person name="Lee C.L."/>
            <person name="Gay F.P.H."/>
            <person name="Lastres P.R."/>
            <person name="Gerlini R."/>
            <person name="Rathkolb B."/>
            <person name="Aguilar-Pimentel A."/>
            <person name="Sanz-Moreno A."/>
            <person name="Klein-Rodewald T."/>
            <person name="Calzada-Wack J."/>
            <person name="Ibragimov E."/>
            <person name="Valenta M."/>
            <person name="Lukauskas S."/>
            <person name="Pavesi A."/>
            <person name="Marschall S."/>
            <person name="Leuchtenberger S."/>
            <person name="Fuchs H."/>
            <person name="Gailus-Durner V."/>
            <person name="de Angelis M.H."/>
            <person name="Bultmann S."/>
            <person name="Rando O.J."/>
            <person name="Guccione E."/>
            <person name="Kellner S.M."/>
            <person name="Schneider R."/>
        </authorList>
    </citation>
    <scope>FUNCTION</scope>
    <scope>CATALYTIC ACTIVITY</scope>
</reference>
<reference key="6">
    <citation type="journal article" date="2021" name="Nucleic Acids Res.">
        <title>Mutually exclusive substrate selection strategy by human m3C RNA transferases METTL2A and METTL6.</title>
        <authorList>
            <person name="Mao X.L."/>
            <person name="Li Z.H."/>
            <person name="Huang M.H."/>
            <person name="Wang J.T."/>
            <person name="Zhou J.B."/>
            <person name="Li Q.R."/>
            <person name="Xu H."/>
            <person name="Wang X.J."/>
            <person name="Zhou X.L."/>
        </authorList>
    </citation>
    <scope>FUNCTION</scope>
    <scope>CATALYTIC ACTIVITY</scope>
    <scope>SUBCELLULAR LOCATION</scope>
    <scope>INTERACTION WITH SARS1</scope>
</reference>
<reference key="7">
    <citation type="journal article" date="2021" name="Biochem. Biophys. Res. Commun.">
        <title>Structural basis for METTL6-mediated m3C RNA methylation.</title>
        <authorList>
            <person name="Li S."/>
            <person name="Zhou H."/>
            <person name="Liao S."/>
            <person name="Wang X."/>
            <person name="Zhu Z."/>
            <person name="Zhang J."/>
            <person name="Xu C."/>
        </authorList>
    </citation>
    <scope>X-RAY CRYSTALLOGRAPHY (2.59 ANGSTROMS) IN COMPLEX WITH S-ADENOSYL-L-METHIONINE</scope>
    <scope>FUNCTION</scope>
    <scope>CATALYTIC ACTIVITY</scope>
    <scope>BIOPHYSICOCHEMICAL PROPERTIES</scope>
</reference>
<reference key="8">
    <citation type="journal article" date="2021" name="Commun. Biol.">
        <title>Crystal structure of human METTL6, the m3C methyltransferase.</title>
        <authorList>
            <person name="Chen R."/>
            <person name="Zhou J."/>
            <person name="Liu L."/>
            <person name="Mao X.L."/>
            <person name="Zhou X."/>
            <person name="Xie W."/>
        </authorList>
    </citation>
    <scope>X-RAY CRYSTALLOGRAPHY (1.90 ANGSTROMS) IN COMPLEX WITH S-ADENOSYL-L-HOMOCYSTEINE</scope>
    <scope>FUNCTION</scope>
    <scope>CATALYTIC ACTIVITY</scope>
    <scope>SUBUNIT</scope>
    <scope>MUTAGENESIS OF TYR-49; HIS-61; GLU-85; CYS-93; ASP-110; PHE-111; SER-161 AND THR-217</scope>
</reference>
<evidence type="ECO:0000269" key="1">
    <source>
    </source>
</evidence>
<evidence type="ECO:0000269" key="2">
    <source>
    </source>
</evidence>
<evidence type="ECO:0000269" key="3">
    <source>
    </source>
</evidence>
<evidence type="ECO:0000269" key="4">
    <source>
    </source>
</evidence>
<evidence type="ECO:0000269" key="5">
    <source>
    </source>
</evidence>
<evidence type="ECO:0000303" key="6">
    <source>
    </source>
</evidence>
<evidence type="ECO:0000303" key="7">
    <source>
    </source>
</evidence>
<evidence type="ECO:0000303" key="8">
    <source>
    </source>
</evidence>
<evidence type="ECO:0000305" key="9"/>
<evidence type="ECO:0000312" key="10">
    <source>
        <dbReference type="HGNC" id="HGNC:28343"/>
    </source>
</evidence>
<evidence type="ECO:0007744" key="11">
    <source>
        <dbReference type="PDB" id="7EZG"/>
    </source>
</evidence>
<evidence type="ECO:0007744" key="12">
    <source>
        <dbReference type="PDB" id="7F1E"/>
    </source>
</evidence>
<evidence type="ECO:0007829" key="13">
    <source>
        <dbReference type="PDB" id="7EZG"/>
    </source>
</evidence>
<evidence type="ECO:0007829" key="14">
    <source>
        <dbReference type="PDB" id="7F1E"/>
    </source>
</evidence>
<evidence type="ECO:0007829" key="15">
    <source>
        <dbReference type="PDB" id="8P7B"/>
    </source>
</evidence>
<protein>
    <recommendedName>
        <fullName evidence="9">tRNA N(3)-cytidine methyltransferase METTL6</fullName>
        <ecNumber evidence="2 3 4 5">2.1.1.-</ecNumber>
    </recommendedName>
    <alternativeName>
        <fullName evidence="9">Methyltransferase-like protein 6</fullName>
        <shortName evidence="8">hMETTL6</shortName>
    </alternativeName>
</protein>
<feature type="chain" id="PRO_0000204454" description="tRNA N(3)-cytidine methyltransferase METTL6">
    <location>
        <begin position="1"/>
        <end position="284"/>
    </location>
</feature>
<feature type="binding site" evidence="5 12">
    <location>
        <position position="45"/>
    </location>
    <ligand>
        <name>S-adenosyl-L-methionine</name>
        <dbReference type="ChEBI" id="CHEBI:59789"/>
    </ligand>
</feature>
<feature type="binding site" evidence="4 11">
    <location>
        <position position="49"/>
    </location>
    <ligand>
        <name>S-adenosyl-L-homocysteine</name>
        <dbReference type="ChEBI" id="CHEBI:57856"/>
    </ligand>
</feature>
<feature type="binding site" evidence="5 12">
    <location>
        <position position="49"/>
    </location>
    <ligand>
        <name>S-adenosyl-L-methionine</name>
        <dbReference type="ChEBI" id="CHEBI:59789"/>
    </ligand>
</feature>
<feature type="binding site" evidence="4 11">
    <location>
        <position position="61"/>
    </location>
    <ligand>
        <name>S-adenosyl-L-homocysteine</name>
        <dbReference type="ChEBI" id="CHEBI:57856"/>
    </ligand>
</feature>
<feature type="binding site" evidence="4 11">
    <location>
        <position position="85"/>
    </location>
    <ligand>
        <name>S-adenosyl-L-homocysteine</name>
        <dbReference type="ChEBI" id="CHEBI:57856"/>
    </ligand>
</feature>
<feature type="binding site" evidence="4 11">
    <location>
        <position position="87"/>
    </location>
    <ligand>
        <name>S-adenosyl-L-homocysteine</name>
        <dbReference type="ChEBI" id="CHEBI:57856"/>
    </ligand>
</feature>
<feature type="binding site" evidence="5 12">
    <location>
        <position position="87"/>
    </location>
    <ligand>
        <name>S-adenosyl-L-methionine</name>
        <dbReference type="ChEBI" id="CHEBI:59789"/>
    </ligand>
</feature>
<feature type="binding site" evidence="4 11">
    <location>
        <position position="110"/>
    </location>
    <ligand>
        <name>S-adenosyl-L-homocysteine</name>
        <dbReference type="ChEBI" id="CHEBI:57856"/>
    </ligand>
</feature>
<feature type="binding site" evidence="5 12">
    <location>
        <position position="110"/>
    </location>
    <ligand>
        <name>S-adenosyl-L-methionine</name>
        <dbReference type="ChEBI" id="CHEBI:59789"/>
    </ligand>
</feature>
<feature type="binding site" evidence="4 11">
    <location>
        <position position="136"/>
    </location>
    <ligand>
        <name>S-adenosyl-L-homocysteine</name>
        <dbReference type="ChEBI" id="CHEBI:57856"/>
    </ligand>
</feature>
<feature type="binding site" evidence="5 12">
    <location>
        <position position="136"/>
    </location>
    <ligand>
        <name>S-adenosyl-L-methionine</name>
        <dbReference type="ChEBI" id="CHEBI:59789"/>
    </ligand>
</feature>
<feature type="binding site" evidence="4 11">
    <location>
        <position position="137"/>
    </location>
    <ligand>
        <name>S-adenosyl-L-homocysteine</name>
        <dbReference type="ChEBI" id="CHEBI:57856"/>
    </ligand>
</feature>
<feature type="binding site" evidence="5 12">
    <location>
        <position position="137"/>
    </location>
    <ligand>
        <name>S-adenosyl-L-methionine</name>
        <dbReference type="ChEBI" id="CHEBI:59789"/>
    </ligand>
</feature>
<feature type="binding site" evidence="4 11">
    <location>
        <position position="157"/>
    </location>
    <ligand>
        <name>S-adenosyl-L-homocysteine</name>
        <dbReference type="ChEBI" id="CHEBI:57856"/>
    </ligand>
</feature>
<feature type="binding site" evidence="5 12">
    <location>
        <position position="157"/>
    </location>
    <ligand>
        <name>S-adenosyl-L-methionine</name>
        <dbReference type="ChEBI" id="CHEBI:59789"/>
    </ligand>
</feature>
<feature type="splice variant" id="VSP_008480" description="In isoform 2." evidence="6">
    <original>VLKPGKSVLFRDYGLYDHAMLRFKASSKLGENFYVRQDGTRSYFFTDDFLAQLFMDTGYEEVVNEYVFRETVNKKEGLCVPRVFLQSKFLKPPKNPSPVVLGLDPKS</original>
    <variation>CHGCSSELRQPWDKDDFAVTWDPWSPAIRVLLCHSGWSAVAWTWLTAASTSWAQAVLPPQPLK</variation>
    <location>
        <begin position="178"/>
        <end position="284"/>
    </location>
</feature>
<feature type="mutagenesis site" description="Decreased affinity for S-adenosyl-L-methionine." evidence="4">
    <original>Y</original>
    <variation>F</variation>
    <location>
        <position position="49"/>
    </location>
</feature>
<feature type="mutagenesis site" description="Decreased affinity for S-adenosyl-L-methionine." evidence="4">
    <original>H</original>
    <variation>N</variation>
    <location>
        <position position="61"/>
    </location>
</feature>
<feature type="mutagenesis site" description="Strongly decreased affinity for S-adenosyl-L-methionine." evidence="4">
    <original>E</original>
    <variation>Q</variation>
    <location>
        <position position="85"/>
    </location>
</feature>
<feature type="mutagenesis site" description="Does not affect affinity for S-adenosyl-L-methionine." evidence="4">
    <original>C</original>
    <variation>S</variation>
    <location>
        <position position="93"/>
    </location>
</feature>
<feature type="mutagenesis site" description="Nearly abolished affinity for S-adenosyl-L-methionine." evidence="4">
    <original>D</original>
    <variation>A</variation>
    <location>
        <position position="110"/>
    </location>
</feature>
<feature type="mutagenesis site" description="Decreased affinity for S-adenosyl-L-methionine." evidence="4">
    <original>F</original>
    <variation>L</variation>
    <location>
        <position position="111"/>
    </location>
</feature>
<feature type="mutagenesis site" description="Strongly reduced RNA (cytosine-3-)-methyltransferase activity." evidence="4">
    <original>S</original>
    <variation>A</variation>
    <location>
        <position position="161"/>
    </location>
</feature>
<feature type="mutagenesis site" description="Strongly reduced RNA (cytosine-3-)-methyltransferase activity." evidence="4">
    <original>T</original>
    <variation>A</variation>
    <location>
        <position position="217"/>
    </location>
</feature>
<feature type="sequence conflict" description="In Ref. 1; BAB71574." evidence="9" ref="1">
    <original>F</original>
    <variation>L</variation>
    <location>
        <position position="67"/>
    </location>
</feature>
<feature type="helix" evidence="13">
    <location>
        <begin position="1"/>
        <end position="13"/>
    </location>
</feature>
<feature type="helix" evidence="13">
    <location>
        <begin position="16"/>
        <end position="25"/>
    </location>
</feature>
<feature type="helix" evidence="13">
    <location>
        <begin position="31"/>
        <end position="39"/>
    </location>
</feature>
<feature type="helix" evidence="13">
    <location>
        <begin position="41"/>
        <end position="50"/>
    </location>
</feature>
<feature type="helix" evidence="13">
    <location>
        <begin position="64"/>
        <end position="71"/>
    </location>
</feature>
<feature type="strand" evidence="14">
    <location>
        <begin position="75"/>
        <end position="78"/>
    </location>
</feature>
<feature type="strand" evidence="13">
    <location>
        <begin position="81"/>
        <end position="87"/>
    </location>
</feature>
<feature type="helix" evidence="13">
    <location>
        <begin position="94"/>
        <end position="98"/>
    </location>
</feature>
<feature type="strand" evidence="13">
    <location>
        <begin position="104"/>
        <end position="111"/>
    </location>
</feature>
<feature type="helix" evidence="13">
    <location>
        <begin position="113"/>
        <end position="120"/>
    </location>
</feature>
<feature type="turn" evidence="13">
    <location>
        <begin position="127"/>
        <end position="129"/>
    </location>
</feature>
<feature type="strand" evidence="13">
    <location>
        <begin position="130"/>
        <end position="134"/>
    </location>
</feature>
<feature type="turn" evidence="13">
    <location>
        <begin position="137"/>
        <end position="139"/>
    </location>
</feature>
<feature type="helix" evidence="13">
    <location>
        <begin position="142"/>
        <end position="144"/>
    </location>
</feature>
<feature type="strand" evidence="13">
    <location>
        <begin position="151"/>
        <end position="158"/>
    </location>
</feature>
<feature type="helix" evidence="13">
    <location>
        <begin position="160"/>
        <end position="162"/>
    </location>
</feature>
<feature type="helix" evidence="13">
    <location>
        <begin position="165"/>
        <end position="167"/>
    </location>
</feature>
<feature type="helix" evidence="13">
    <location>
        <begin position="168"/>
        <end position="176"/>
    </location>
</feature>
<feature type="strand" evidence="13">
    <location>
        <begin position="179"/>
        <end position="191"/>
    </location>
</feature>
<feature type="helix" evidence="13">
    <location>
        <begin position="195"/>
        <end position="199"/>
    </location>
</feature>
<feature type="helix" evidence="15">
    <location>
        <begin position="202"/>
        <end position="204"/>
    </location>
</feature>
<feature type="strand" evidence="13">
    <location>
        <begin position="205"/>
        <end position="207"/>
    </location>
</feature>
<feature type="strand" evidence="13">
    <location>
        <begin position="210"/>
        <end position="212"/>
    </location>
</feature>
<feature type="strand" evidence="13">
    <location>
        <begin position="218"/>
        <end position="220"/>
    </location>
</feature>
<feature type="helix" evidence="13">
    <location>
        <begin position="224"/>
        <end position="233"/>
    </location>
</feature>
<feature type="strand" evidence="13">
    <location>
        <begin position="237"/>
        <end position="246"/>
    </location>
</feature>
<feature type="turn" evidence="15">
    <location>
        <begin position="251"/>
        <end position="254"/>
    </location>
</feature>
<feature type="strand" evidence="13">
    <location>
        <begin position="259"/>
        <end position="267"/>
    </location>
</feature>
<sequence length="284" mass="33251">MASLQRKGLQARILTSEEEEKLKRDQTLVSDFKQQKLEQEAQKNWDLFYKRNSTNFFKDRHWTTREFEELRSCREFEDQKLTMLEAGCGVGNCLFPLLEEDPNIFAYACDFSPRAIEYVKQNPLYDTERCKVFQCDLTKDDLLDHVPPESVDVVMLIFVLSAVHPDKMHLVLQNIYKVLKPGKSVLFRDYGLYDHAMLRFKASSKLGENFYVRQDGTRSYFFTDDFLAQLFMDTGYEEVVNEYVFRETVNKKEGLCVPRVFLQSKFLKPPKNPSPVVLGLDPKS</sequence>
<name>METL6_HUMAN</name>